<organism>
    <name type="scientific">Bos taurus</name>
    <name type="common">Bovine</name>
    <dbReference type="NCBI Taxonomy" id="9913"/>
    <lineage>
        <taxon>Eukaryota</taxon>
        <taxon>Metazoa</taxon>
        <taxon>Chordata</taxon>
        <taxon>Craniata</taxon>
        <taxon>Vertebrata</taxon>
        <taxon>Euteleostomi</taxon>
        <taxon>Mammalia</taxon>
        <taxon>Eutheria</taxon>
        <taxon>Laurasiatheria</taxon>
        <taxon>Artiodactyla</taxon>
        <taxon>Ruminantia</taxon>
        <taxon>Pecora</taxon>
        <taxon>Bovidae</taxon>
        <taxon>Bovinae</taxon>
        <taxon>Bos</taxon>
    </lineage>
</organism>
<sequence>MATPYVTDETGGKYIASTQRPDGTWRKQRRVKEGYVPQEEVPVYENKYVKFFKSKPELPPGLSPEATAPITASRPEGGEPALSKTAKRNLKRKEKRRQQQEKGEAEALSRTLEKVSLGETAQVPSAPQASRAAPTAASDQPDSAATTEKAKKIKNLKKKLRQVEELQQRIQAGEISQPSKEQLEKLARRRALEEELEDLELGL</sequence>
<name>PYM1_BOVIN</name>
<reference key="1">
    <citation type="submission" date="2007-07" db="EMBL/GenBank/DDBJ databases">
        <authorList>
            <consortium name="NIH - Mammalian Gene Collection (MGC) project"/>
        </authorList>
    </citation>
    <scope>NUCLEOTIDE SEQUENCE [LARGE SCALE MRNA]</scope>
    <source>
        <strain>Hereford</strain>
        <tissue>Fetal liver</tissue>
    </source>
</reference>
<feature type="chain" id="PRO_0000378155" description="Partner of Y14 and mago">
    <location>
        <begin position="1"/>
        <end position="203"/>
    </location>
</feature>
<feature type="region of interest" description="Required for interaction with MAGOH and RBM8A" evidence="1">
    <location>
        <begin position="1"/>
        <end position="32"/>
    </location>
</feature>
<feature type="region of interest" description="Disordered" evidence="5">
    <location>
        <begin position="1"/>
        <end position="30"/>
    </location>
</feature>
<feature type="region of interest" description="Disordered" evidence="5">
    <location>
        <begin position="54"/>
        <end position="149"/>
    </location>
</feature>
<feature type="region of interest" description="eIF2A-like" evidence="1">
    <location>
        <begin position="151"/>
        <end position="203"/>
    </location>
</feature>
<feature type="coiled-coil region" evidence="4">
    <location>
        <begin position="81"/>
        <end position="116"/>
    </location>
</feature>
<feature type="coiled-coil region" evidence="4">
    <location>
        <begin position="144"/>
        <end position="203"/>
    </location>
</feature>
<feature type="compositionally biased region" description="Basic residues" evidence="5">
    <location>
        <begin position="85"/>
        <end position="96"/>
    </location>
</feature>
<feature type="compositionally biased region" description="Basic and acidic residues" evidence="5">
    <location>
        <begin position="97"/>
        <end position="113"/>
    </location>
</feature>
<feature type="compositionally biased region" description="Low complexity" evidence="5">
    <location>
        <begin position="121"/>
        <end position="140"/>
    </location>
</feature>
<feature type="modified residue" description="Phosphoserine" evidence="3">
    <location>
        <position position="63"/>
    </location>
</feature>
<feature type="modified residue" description="Phosphothreonine" evidence="3">
    <location>
        <position position="71"/>
    </location>
</feature>
<feature type="modified residue" description="Phosphoserine" evidence="3">
    <location>
        <position position="116"/>
    </location>
</feature>
<dbReference type="EMBL" id="BC149320">
    <property type="protein sequence ID" value="AAI49321.1"/>
    <property type="molecule type" value="mRNA"/>
</dbReference>
<dbReference type="RefSeq" id="NP_001095814.1">
    <property type="nucleotide sequence ID" value="NM_001102344.1"/>
</dbReference>
<dbReference type="SMR" id="A6QPH1"/>
<dbReference type="FunCoup" id="A6QPH1">
    <property type="interactions" value="2145"/>
</dbReference>
<dbReference type="STRING" id="9913.ENSBTAP00000041588"/>
<dbReference type="PaxDb" id="9913-ENSBTAP00000041588"/>
<dbReference type="PeptideAtlas" id="A6QPH1"/>
<dbReference type="GeneID" id="787259"/>
<dbReference type="KEGG" id="bta:787259"/>
<dbReference type="CTD" id="84305"/>
<dbReference type="VEuPathDB" id="HostDB:ENSBTAG00000031146"/>
<dbReference type="eggNOG" id="KOG4325">
    <property type="taxonomic scope" value="Eukaryota"/>
</dbReference>
<dbReference type="HOGENOM" id="CLU_074603_3_0_1"/>
<dbReference type="InParanoid" id="A6QPH1"/>
<dbReference type="OMA" id="IPGCADS"/>
<dbReference type="OrthoDB" id="21625at2759"/>
<dbReference type="TreeFam" id="TF324615"/>
<dbReference type="Proteomes" id="UP000009136">
    <property type="component" value="Chromosome 5"/>
</dbReference>
<dbReference type="Bgee" id="ENSBTAG00000031146">
    <property type="expression patterns" value="Expressed in anterior segment of eyeball and 104 other cell types or tissues"/>
</dbReference>
<dbReference type="GO" id="GO:0005737">
    <property type="term" value="C:cytoplasm"/>
    <property type="evidence" value="ECO:0000318"/>
    <property type="project" value="GO_Central"/>
</dbReference>
<dbReference type="GO" id="GO:0035145">
    <property type="term" value="C:exon-exon junction complex"/>
    <property type="evidence" value="ECO:0000250"/>
    <property type="project" value="UniProtKB"/>
</dbReference>
<dbReference type="GO" id="GO:0005730">
    <property type="term" value="C:nucleolus"/>
    <property type="evidence" value="ECO:0007669"/>
    <property type="project" value="UniProtKB-SubCell"/>
</dbReference>
<dbReference type="GO" id="GO:0005654">
    <property type="term" value="C:nucleoplasm"/>
    <property type="evidence" value="ECO:0007669"/>
    <property type="project" value="UniProtKB-SubCell"/>
</dbReference>
<dbReference type="GO" id="GO:0043022">
    <property type="term" value="F:ribosome binding"/>
    <property type="evidence" value="ECO:0000250"/>
    <property type="project" value="UniProtKB"/>
</dbReference>
<dbReference type="GO" id="GO:0003723">
    <property type="term" value="F:RNA binding"/>
    <property type="evidence" value="ECO:0000318"/>
    <property type="project" value="GO_Central"/>
</dbReference>
<dbReference type="GO" id="GO:1903259">
    <property type="term" value="P:exon-exon junction complex disassembly"/>
    <property type="evidence" value="ECO:0000318"/>
    <property type="project" value="GO_Central"/>
</dbReference>
<dbReference type="GO" id="GO:0000184">
    <property type="term" value="P:nuclear-transcribed mRNA catabolic process, nonsense-mediated decay"/>
    <property type="evidence" value="ECO:0000250"/>
    <property type="project" value="UniProtKB"/>
</dbReference>
<dbReference type="GO" id="GO:0045727">
    <property type="term" value="P:positive regulation of translation"/>
    <property type="evidence" value="ECO:0000250"/>
    <property type="project" value="UniProtKB"/>
</dbReference>
<dbReference type="InterPro" id="IPR039333">
    <property type="entry name" value="PYM1"/>
</dbReference>
<dbReference type="InterPro" id="IPR015362">
    <property type="entry name" value="WIBG_mago-bd"/>
</dbReference>
<dbReference type="InterPro" id="IPR036348">
    <property type="entry name" value="WIBG_N_sf"/>
</dbReference>
<dbReference type="PANTHER" id="PTHR22959:SF0">
    <property type="entry name" value="PARTNER OF Y14 AND MAGO"/>
    <property type="match status" value="1"/>
</dbReference>
<dbReference type="PANTHER" id="PTHR22959">
    <property type="entry name" value="PYM PROTEIN"/>
    <property type="match status" value="1"/>
</dbReference>
<dbReference type="Pfam" id="PF09282">
    <property type="entry name" value="Mago-bind"/>
    <property type="match status" value="1"/>
</dbReference>
<dbReference type="SMART" id="SM01273">
    <property type="entry name" value="Mago-bind"/>
    <property type="match status" value="1"/>
</dbReference>
<dbReference type="SUPFAM" id="SSF101931">
    <property type="entry name" value="Pym (Within the bgcn gene intron protein, WIBG), N-terminal domain"/>
    <property type="match status" value="1"/>
</dbReference>
<protein>
    <recommendedName>
        <fullName evidence="2">Partner of Y14 and mago</fullName>
    </recommendedName>
    <alternativeName>
        <fullName evidence="3">PYM homolog 1 exon junction complex-associated factor</fullName>
    </alternativeName>
    <alternativeName>
        <fullName>Protein wibg homolog</fullName>
    </alternativeName>
</protein>
<gene>
    <name evidence="3" type="primary">PYM1</name>
    <name type="synonym">PYM</name>
    <name type="synonym">WIBG</name>
</gene>
<evidence type="ECO:0000250" key="1"/>
<evidence type="ECO:0000250" key="2">
    <source>
        <dbReference type="UniProtKB" id="P82804"/>
    </source>
</evidence>
<evidence type="ECO:0000250" key="3">
    <source>
        <dbReference type="UniProtKB" id="Q9BRP8"/>
    </source>
</evidence>
<evidence type="ECO:0000255" key="4"/>
<evidence type="ECO:0000256" key="5">
    <source>
        <dbReference type="SAM" id="MobiDB-lite"/>
    </source>
</evidence>
<evidence type="ECO:0000305" key="6"/>
<proteinExistence type="evidence at transcript level"/>
<accession>A6QPH1</accession>
<keyword id="KW-0175">Coiled coil</keyword>
<keyword id="KW-0963">Cytoplasm</keyword>
<keyword id="KW-0866">Nonsense-mediated mRNA decay</keyword>
<keyword id="KW-0539">Nucleus</keyword>
<keyword id="KW-0597">Phosphoprotein</keyword>
<keyword id="KW-1185">Reference proteome</keyword>
<keyword id="KW-0810">Translation regulation</keyword>
<comment type="function">
    <text evidence="1">Key regulator of the exon junction complex (EJC), a multiprotein complex that associates immediately upstream of the exon-exon junction on mRNAs and serves as a positional landmark for the intron exon structure of genes and directs post-transcriptional processes in the cytoplasm such as mRNA export, nonsense-mediated mRNA decay (NMD) or translation. Acts as an EJC disassembly factor, allowing translation-dependent EJC removal and recycling by disrupting mature EJC from spliced mRNAs. Its association with the 40S ribosomal subunit probably prevents a translation-independent disassembly of the EJC from spliced mRNAs, by restricting its activity to mRNAs that have been translated. Interferes with NMD and enhances translation of spliced mRNAs, probably by antagonizing EJC functions (By similarity).</text>
</comment>
<comment type="subunit">
    <text evidence="1">Interacts (via N-terminus) with MAGOH and RBM8A; the interaction is direct. Associates (eIF2A-like region) with the 40S ribosomal subunit and the 48S preinitiation complex (By similarity).</text>
</comment>
<comment type="subcellular location">
    <subcellularLocation>
        <location evidence="3">Cytoplasm</location>
    </subcellularLocation>
    <subcellularLocation>
        <location evidence="3">Nucleus</location>
        <location evidence="3">Nucleolus</location>
    </subcellularLocation>
    <subcellularLocation>
        <location evidence="3">Nucleus</location>
        <location evidence="3">Nucleoplasm</location>
    </subcellularLocation>
    <text evidence="3">Shuttles between the nucleus and the cytoplasm. Nuclear export is mediated by XPO1/CRM1.</text>
</comment>
<comment type="domain">
    <text evidence="1">The eIF2A-like region shares sequence similarity with eIF2A and mediates the interaction with the 40S ribosomal subunit and the 48S preinitiation complex.</text>
</comment>
<comment type="similarity">
    <text evidence="6">Belongs to the pym family.</text>
</comment>